<feature type="chain" id="PRO_0000073018" description="Vacuolar protein sorting-associated protein 26C">
    <location>
        <begin position="1"/>
        <end position="297"/>
    </location>
</feature>
<proteinExistence type="evidence at transcript level"/>
<sequence>MGTALDIKIKRANKVYHAGEVLSGVVVISSKDSVQHQGVSLTMEGTVNLQLSAKSVGVFEAFYNSVKPIQIINSNIEMVKPGKFPSGKTEIPFEFPLHVKGNKVLYETYHGVFVNIQYTLRCDMKRSLLAKDLTKTCEFIVHSAPQKGKFSPSPVHFTITPETLQNARERALLPKFLLRGHLNSTNCVITQPLTGELVVESSEAAIRSVELQLVRVETCGCAEGYARDATEIQNIQIADGDVCRGLSVPIYMVFPRLFTCPTLETTNFKVEFEVNIVVLLHPDHLITENFPLKLCRI</sequence>
<reference key="1">
    <citation type="submission" date="2004-11" db="EMBL/GenBank/DDBJ databases">
        <authorList>
            <consortium name="The German cDNA consortium"/>
        </authorList>
    </citation>
    <scope>NUCLEOTIDE SEQUENCE [LARGE SCALE MRNA]</scope>
    <source>
        <tissue>Kidney</tissue>
    </source>
</reference>
<gene>
    <name type="primary">VPS26C</name>
    <name type="synonym">DSCR3</name>
</gene>
<comment type="function">
    <text evidence="1">Component of the commander complex that is essential for endosomal recycling of transmembrane cargos; the commander complex is composed of the CCC subcomplex and the retriever subcomplex (By similarity). Component of the retriever complex, which is a heterotrimeric complex related to retromer cargo-selective complex (CSC) and essential for retromer-independent retrieval and recycling of numerous cargos such as integrin alpha-5/beta-1 (ITGA5:ITGB1) (By similarity). The recruitment of the retriever complex to the endosomal membrane involves CCC and WASH complexes (By similarity). In the endosomes, drives the retriever and recycling of NxxY-motif-containing cargo proteins by coupling to SNX17, a cargo essential for the homeostatic maintenance of numerous cell surface proteins associated with processes that include cell migration, cell adhesion, nutrient supply and cell signaling (By similarity).</text>
</comment>
<comment type="subunit">
    <text evidence="1">Component of the commander complex that is essential for endosomal recycling of transmembrane cargos; the commander complex is composed of the CCC subcomplex and the retriever subcomplex (By similarity). Component of the heterotrimeric retriever complex consisting of VPS26C, VPS29 and VPS35L; within the complex interacts with VPS35L (By similarity). Interacts with SNX17 (via C-terminus); the interaction is direct and associates SNX17 with the retriever complex (By similarity). Interacts with SNX31; the interaction is direct (By similarity).</text>
</comment>
<comment type="subcellular location">
    <subcellularLocation>
        <location evidence="1">Endosome</location>
    </subcellularLocation>
</comment>
<comment type="similarity">
    <text evidence="2">Belongs to the VPS26 family.</text>
</comment>
<keyword id="KW-0967">Endosome</keyword>
<keyword id="KW-1185">Reference proteome</keyword>
<dbReference type="EMBL" id="CR857328">
    <property type="protein sequence ID" value="CAH89624.1"/>
    <property type="molecule type" value="mRNA"/>
</dbReference>
<dbReference type="RefSeq" id="NP_001124728.1">
    <property type="nucleotide sequence ID" value="NM_001131256.2"/>
</dbReference>
<dbReference type="SMR" id="Q5RF33"/>
<dbReference type="FunCoup" id="Q5RF33">
    <property type="interactions" value="3327"/>
</dbReference>
<dbReference type="STRING" id="9601.ENSPPYP00000012737"/>
<dbReference type="Ensembl" id="ENSPPYT00000038658.1">
    <property type="protein sequence ID" value="ENSPPYP00000044029.1"/>
    <property type="gene ID" value="ENSPPYG00000040834.1"/>
</dbReference>
<dbReference type="GeneID" id="100171577"/>
<dbReference type="KEGG" id="pon:100171577"/>
<dbReference type="CTD" id="10311"/>
<dbReference type="eggNOG" id="KOG2717">
    <property type="taxonomic scope" value="Eukaryota"/>
</dbReference>
<dbReference type="GeneTree" id="ENSGT00950000183064"/>
<dbReference type="HOGENOM" id="CLU_056829_0_0_1"/>
<dbReference type="InParanoid" id="Q5RF33"/>
<dbReference type="OMA" id="CVTMPIT"/>
<dbReference type="OrthoDB" id="10263384at2759"/>
<dbReference type="TreeFam" id="TF323199"/>
<dbReference type="Proteomes" id="UP000001595">
    <property type="component" value="Chromosome 21"/>
</dbReference>
<dbReference type="GO" id="GO:0005768">
    <property type="term" value="C:endosome"/>
    <property type="evidence" value="ECO:0007669"/>
    <property type="project" value="UniProtKB-SubCell"/>
</dbReference>
<dbReference type="GO" id="GO:0032456">
    <property type="term" value="P:endocytic recycling"/>
    <property type="evidence" value="ECO:0000250"/>
    <property type="project" value="UniProtKB"/>
</dbReference>
<dbReference type="GO" id="GO:0006886">
    <property type="term" value="P:intracellular protein transport"/>
    <property type="evidence" value="ECO:0007669"/>
    <property type="project" value="InterPro"/>
</dbReference>
<dbReference type="FunFam" id="2.60.40.640:FF:000008">
    <property type="entry name" value="Down syndrome critical region protein 3"/>
    <property type="match status" value="1"/>
</dbReference>
<dbReference type="FunFam" id="2.60.40.640:FF:000009">
    <property type="entry name" value="Down syndrome critical region protein 3"/>
    <property type="match status" value="1"/>
</dbReference>
<dbReference type="Gene3D" id="2.60.40.640">
    <property type="match status" value="2"/>
</dbReference>
<dbReference type="InterPro" id="IPR014752">
    <property type="entry name" value="Arrestin-like_C"/>
</dbReference>
<dbReference type="InterPro" id="IPR014756">
    <property type="entry name" value="Ig_E-set"/>
</dbReference>
<dbReference type="InterPro" id="IPR028934">
    <property type="entry name" value="Vps26-related"/>
</dbReference>
<dbReference type="PANTHER" id="PTHR12233">
    <property type="entry name" value="VACUOLAR PROTEIN SORTING 26 RELATED"/>
    <property type="match status" value="1"/>
</dbReference>
<dbReference type="Pfam" id="PF03643">
    <property type="entry name" value="Vps26"/>
    <property type="match status" value="1"/>
</dbReference>
<dbReference type="SUPFAM" id="SSF81296">
    <property type="entry name" value="E set domains"/>
    <property type="match status" value="1"/>
</dbReference>
<evidence type="ECO:0000250" key="1">
    <source>
        <dbReference type="UniProtKB" id="O14972"/>
    </source>
</evidence>
<evidence type="ECO:0000305" key="2"/>
<accession>Q5RF33</accession>
<protein>
    <recommendedName>
        <fullName evidence="2">Vacuolar protein sorting-associated protein 26C</fullName>
    </recommendedName>
    <alternativeName>
        <fullName>Down syndrome critical region protein 3 homolog</fullName>
    </alternativeName>
</protein>
<name>VP26C_PONAB</name>
<organism>
    <name type="scientific">Pongo abelii</name>
    <name type="common">Sumatran orangutan</name>
    <name type="synonym">Pongo pygmaeus abelii</name>
    <dbReference type="NCBI Taxonomy" id="9601"/>
    <lineage>
        <taxon>Eukaryota</taxon>
        <taxon>Metazoa</taxon>
        <taxon>Chordata</taxon>
        <taxon>Craniata</taxon>
        <taxon>Vertebrata</taxon>
        <taxon>Euteleostomi</taxon>
        <taxon>Mammalia</taxon>
        <taxon>Eutheria</taxon>
        <taxon>Euarchontoglires</taxon>
        <taxon>Primates</taxon>
        <taxon>Haplorrhini</taxon>
        <taxon>Catarrhini</taxon>
        <taxon>Hominidae</taxon>
        <taxon>Pongo</taxon>
    </lineage>
</organism>